<keyword id="KW-0028">Amino-acid biosynthesis</keyword>
<keyword id="KW-0057">Aromatic amino acid biosynthesis</keyword>
<keyword id="KW-0963">Cytoplasm</keyword>
<keyword id="KW-0808">Transferase</keyword>
<gene>
    <name evidence="1" type="primary">aroA</name>
    <name type="ordered locus">Bcep18194_A4158</name>
</gene>
<feature type="chain" id="PRO_1000012419" description="3-phosphoshikimate 1-carboxyvinyltransferase">
    <location>
        <begin position="1"/>
        <end position="434"/>
    </location>
</feature>
<feature type="active site" description="Proton acceptor" evidence="1">
    <location>
        <position position="320"/>
    </location>
</feature>
<feature type="binding site" evidence="1">
    <location>
        <position position="22"/>
    </location>
    <ligand>
        <name>3-phosphoshikimate</name>
        <dbReference type="ChEBI" id="CHEBI:145989"/>
    </ligand>
</feature>
<feature type="binding site" evidence="1">
    <location>
        <position position="22"/>
    </location>
    <ligand>
        <name>phosphoenolpyruvate</name>
        <dbReference type="ChEBI" id="CHEBI:58702"/>
    </ligand>
</feature>
<feature type="binding site" evidence="1">
    <location>
        <position position="23"/>
    </location>
    <ligand>
        <name>3-phosphoshikimate</name>
        <dbReference type="ChEBI" id="CHEBI:145989"/>
    </ligand>
</feature>
<feature type="binding site" evidence="1">
    <location>
        <position position="27"/>
    </location>
    <ligand>
        <name>3-phosphoshikimate</name>
        <dbReference type="ChEBI" id="CHEBI:145989"/>
    </ligand>
</feature>
<feature type="binding site" evidence="1">
    <location>
        <position position="93"/>
    </location>
    <ligand>
        <name>phosphoenolpyruvate</name>
        <dbReference type="ChEBI" id="CHEBI:58702"/>
    </ligand>
</feature>
<feature type="binding site" evidence="1">
    <location>
        <position position="121"/>
    </location>
    <ligand>
        <name>phosphoenolpyruvate</name>
        <dbReference type="ChEBI" id="CHEBI:58702"/>
    </ligand>
</feature>
<feature type="binding site" evidence="1">
    <location>
        <position position="168"/>
    </location>
    <ligand>
        <name>3-phosphoshikimate</name>
        <dbReference type="ChEBI" id="CHEBI:145989"/>
    </ligand>
</feature>
<feature type="binding site" evidence="1">
    <location>
        <position position="169"/>
    </location>
    <ligand>
        <name>3-phosphoshikimate</name>
        <dbReference type="ChEBI" id="CHEBI:145989"/>
    </ligand>
</feature>
<feature type="binding site" evidence="1">
    <location>
        <position position="170"/>
    </location>
    <ligand>
        <name>3-phosphoshikimate</name>
        <dbReference type="ChEBI" id="CHEBI:145989"/>
    </ligand>
</feature>
<feature type="binding site" evidence="1">
    <location>
        <position position="170"/>
    </location>
    <ligand>
        <name>phosphoenolpyruvate</name>
        <dbReference type="ChEBI" id="CHEBI:58702"/>
    </ligand>
</feature>
<feature type="binding site" evidence="1">
    <location>
        <position position="199"/>
    </location>
    <ligand>
        <name>3-phosphoshikimate</name>
        <dbReference type="ChEBI" id="CHEBI:145989"/>
    </ligand>
</feature>
<feature type="binding site" evidence="1">
    <location>
        <position position="320"/>
    </location>
    <ligand>
        <name>3-phosphoshikimate</name>
        <dbReference type="ChEBI" id="CHEBI:145989"/>
    </ligand>
</feature>
<feature type="binding site" evidence="1">
    <location>
        <position position="347"/>
    </location>
    <ligand>
        <name>3-phosphoshikimate</name>
        <dbReference type="ChEBI" id="CHEBI:145989"/>
    </ligand>
</feature>
<feature type="binding site" evidence="1">
    <location>
        <position position="351"/>
    </location>
    <ligand>
        <name>phosphoenolpyruvate</name>
        <dbReference type="ChEBI" id="CHEBI:58702"/>
    </ligand>
</feature>
<feature type="binding site" evidence="1">
    <location>
        <position position="394"/>
    </location>
    <ligand>
        <name>phosphoenolpyruvate</name>
        <dbReference type="ChEBI" id="CHEBI:58702"/>
    </ligand>
</feature>
<feature type="binding site" evidence="1">
    <location>
        <position position="419"/>
    </location>
    <ligand>
        <name>phosphoenolpyruvate</name>
        <dbReference type="ChEBI" id="CHEBI:58702"/>
    </ligand>
</feature>
<comment type="function">
    <text evidence="1">Catalyzes the transfer of the enolpyruvyl moiety of phosphoenolpyruvate (PEP) to the 5-hydroxyl of shikimate-3-phosphate (S3P) to produce enolpyruvyl shikimate-3-phosphate and inorganic phosphate.</text>
</comment>
<comment type="catalytic activity">
    <reaction evidence="1">
        <text>3-phosphoshikimate + phosphoenolpyruvate = 5-O-(1-carboxyvinyl)-3-phosphoshikimate + phosphate</text>
        <dbReference type="Rhea" id="RHEA:21256"/>
        <dbReference type="ChEBI" id="CHEBI:43474"/>
        <dbReference type="ChEBI" id="CHEBI:57701"/>
        <dbReference type="ChEBI" id="CHEBI:58702"/>
        <dbReference type="ChEBI" id="CHEBI:145989"/>
        <dbReference type="EC" id="2.5.1.19"/>
    </reaction>
    <physiologicalReaction direction="left-to-right" evidence="1">
        <dbReference type="Rhea" id="RHEA:21257"/>
    </physiologicalReaction>
</comment>
<comment type="pathway">
    <text evidence="1">Metabolic intermediate biosynthesis; chorismate biosynthesis; chorismate from D-erythrose 4-phosphate and phosphoenolpyruvate: step 6/7.</text>
</comment>
<comment type="subunit">
    <text evidence="1">Monomer.</text>
</comment>
<comment type="subcellular location">
    <subcellularLocation>
        <location evidence="1">Cytoplasm</location>
    </subcellularLocation>
</comment>
<comment type="similarity">
    <text evidence="1">Belongs to the EPSP synthase family.</text>
</comment>
<sequence length="434" mass="46390">MDYLDLGPYSSASGTVRLPGSKSISNRVLLLAALAEGETTITNLLDSDDTRVMLDALGTLGVKLARDGDTCVVTGTRGAFTAKTADLFLGNAGTAVRPLTAALAVNGGDYRVHGVPRMHERPIGDLVDGLRQIGAQIDYELNEGYPPLRIKPANISVDAPIRVRGDVSSQFLTALLMTLPLVKAKDGKIVVEVDGELISKPYIDITIRLMERFGVTVERDGWQRFVVPAGVRYRSPGRIMVEGDASSASYFLAAGALGGGPLRVEGVGRASIQGDVGFANALMQMGANVTMGDDWIDVRGIGHDHGKLEPIDMDFNLIPDAAMTIAVAALFANGTSTLRNIASWRVKETDRIAAMATELRKVGAIIEEGPDYLVVTPPEKLTPNAAIDTYDDHRMAMCFSLVSLGGVPVRINDPKCVGKTFPDYFDRFAALAKA</sequence>
<accession>Q39IG1</accession>
<organism>
    <name type="scientific">Burkholderia lata (strain ATCC 17760 / DSM 23089 / LMG 22485 / NCIMB 9086 / R18194 / 383)</name>
    <dbReference type="NCBI Taxonomy" id="482957"/>
    <lineage>
        <taxon>Bacteria</taxon>
        <taxon>Pseudomonadati</taxon>
        <taxon>Pseudomonadota</taxon>
        <taxon>Betaproteobacteria</taxon>
        <taxon>Burkholderiales</taxon>
        <taxon>Burkholderiaceae</taxon>
        <taxon>Burkholderia</taxon>
        <taxon>Burkholderia cepacia complex</taxon>
    </lineage>
</organism>
<name>AROA_BURL3</name>
<proteinExistence type="inferred from homology"/>
<evidence type="ECO:0000255" key="1">
    <source>
        <dbReference type="HAMAP-Rule" id="MF_00210"/>
    </source>
</evidence>
<reference key="1">
    <citation type="submission" date="2005-10" db="EMBL/GenBank/DDBJ databases">
        <title>Complete sequence of chromosome 1 of Burkholderia sp. 383.</title>
        <authorList>
            <consortium name="US DOE Joint Genome Institute"/>
            <person name="Copeland A."/>
            <person name="Lucas S."/>
            <person name="Lapidus A."/>
            <person name="Barry K."/>
            <person name="Detter J.C."/>
            <person name="Glavina T."/>
            <person name="Hammon N."/>
            <person name="Israni S."/>
            <person name="Pitluck S."/>
            <person name="Chain P."/>
            <person name="Malfatti S."/>
            <person name="Shin M."/>
            <person name="Vergez L."/>
            <person name="Schmutz J."/>
            <person name="Larimer F."/>
            <person name="Land M."/>
            <person name="Kyrpides N."/>
            <person name="Lykidis A."/>
            <person name="Richardson P."/>
        </authorList>
    </citation>
    <scope>NUCLEOTIDE SEQUENCE [LARGE SCALE GENOMIC DNA]</scope>
    <source>
        <strain>ATCC 17760 / DSM 23089 / LMG 22485 / NCIMB 9086 / R18194 / 383</strain>
    </source>
</reference>
<protein>
    <recommendedName>
        <fullName evidence="1">3-phosphoshikimate 1-carboxyvinyltransferase</fullName>
        <ecNumber evidence="1">2.5.1.19</ecNumber>
    </recommendedName>
    <alternativeName>
        <fullName evidence="1">5-enolpyruvylshikimate-3-phosphate synthase</fullName>
        <shortName evidence="1">EPSP synthase</shortName>
        <shortName evidence="1">EPSPS</shortName>
    </alternativeName>
</protein>
<dbReference type="EC" id="2.5.1.19" evidence="1"/>
<dbReference type="EMBL" id="CP000151">
    <property type="protein sequence ID" value="ABB07755.1"/>
    <property type="molecule type" value="Genomic_DNA"/>
</dbReference>
<dbReference type="RefSeq" id="WP_011351333.1">
    <property type="nucleotide sequence ID" value="NC_007510.1"/>
</dbReference>
<dbReference type="SMR" id="Q39IG1"/>
<dbReference type="GeneID" id="45094057"/>
<dbReference type="KEGG" id="bur:Bcep18194_A4158"/>
<dbReference type="PATRIC" id="fig|482957.22.peg.1045"/>
<dbReference type="HOGENOM" id="CLU_024321_0_0_4"/>
<dbReference type="UniPathway" id="UPA00053">
    <property type="reaction ID" value="UER00089"/>
</dbReference>
<dbReference type="Proteomes" id="UP000002705">
    <property type="component" value="Chromosome 1"/>
</dbReference>
<dbReference type="GO" id="GO:0005737">
    <property type="term" value="C:cytoplasm"/>
    <property type="evidence" value="ECO:0007669"/>
    <property type="project" value="UniProtKB-SubCell"/>
</dbReference>
<dbReference type="GO" id="GO:0003866">
    <property type="term" value="F:3-phosphoshikimate 1-carboxyvinyltransferase activity"/>
    <property type="evidence" value="ECO:0007669"/>
    <property type="project" value="UniProtKB-UniRule"/>
</dbReference>
<dbReference type="GO" id="GO:0008652">
    <property type="term" value="P:amino acid biosynthetic process"/>
    <property type="evidence" value="ECO:0007669"/>
    <property type="project" value="UniProtKB-KW"/>
</dbReference>
<dbReference type="GO" id="GO:0009073">
    <property type="term" value="P:aromatic amino acid family biosynthetic process"/>
    <property type="evidence" value="ECO:0007669"/>
    <property type="project" value="UniProtKB-KW"/>
</dbReference>
<dbReference type="GO" id="GO:0009423">
    <property type="term" value="P:chorismate biosynthetic process"/>
    <property type="evidence" value="ECO:0007669"/>
    <property type="project" value="UniProtKB-UniRule"/>
</dbReference>
<dbReference type="CDD" id="cd01556">
    <property type="entry name" value="EPSP_synthase"/>
    <property type="match status" value="1"/>
</dbReference>
<dbReference type="FunFam" id="3.65.10.10:FF:000003">
    <property type="entry name" value="3-phosphoshikimate 1-carboxyvinyltransferase"/>
    <property type="match status" value="1"/>
</dbReference>
<dbReference type="FunFam" id="3.65.10.10:FF:000004">
    <property type="entry name" value="3-phosphoshikimate 1-carboxyvinyltransferase"/>
    <property type="match status" value="1"/>
</dbReference>
<dbReference type="Gene3D" id="3.65.10.10">
    <property type="entry name" value="Enolpyruvate transferase domain"/>
    <property type="match status" value="2"/>
</dbReference>
<dbReference type="HAMAP" id="MF_00210">
    <property type="entry name" value="EPSP_synth"/>
    <property type="match status" value="1"/>
</dbReference>
<dbReference type="InterPro" id="IPR001986">
    <property type="entry name" value="Enolpyruvate_Tfrase_dom"/>
</dbReference>
<dbReference type="InterPro" id="IPR036968">
    <property type="entry name" value="Enolpyruvate_Tfrase_sf"/>
</dbReference>
<dbReference type="InterPro" id="IPR006264">
    <property type="entry name" value="EPSP_synthase"/>
</dbReference>
<dbReference type="InterPro" id="IPR023193">
    <property type="entry name" value="EPSP_synthase_CS"/>
</dbReference>
<dbReference type="InterPro" id="IPR013792">
    <property type="entry name" value="RNA3'P_cycl/enolpyr_Trfase_a/b"/>
</dbReference>
<dbReference type="NCBIfam" id="TIGR01356">
    <property type="entry name" value="aroA"/>
    <property type="match status" value="1"/>
</dbReference>
<dbReference type="PANTHER" id="PTHR21090">
    <property type="entry name" value="AROM/DEHYDROQUINATE SYNTHASE"/>
    <property type="match status" value="1"/>
</dbReference>
<dbReference type="PANTHER" id="PTHR21090:SF5">
    <property type="entry name" value="PENTAFUNCTIONAL AROM POLYPEPTIDE"/>
    <property type="match status" value="1"/>
</dbReference>
<dbReference type="Pfam" id="PF00275">
    <property type="entry name" value="EPSP_synthase"/>
    <property type="match status" value="1"/>
</dbReference>
<dbReference type="PIRSF" id="PIRSF000505">
    <property type="entry name" value="EPSPS"/>
    <property type="match status" value="1"/>
</dbReference>
<dbReference type="SUPFAM" id="SSF55205">
    <property type="entry name" value="EPT/RTPC-like"/>
    <property type="match status" value="1"/>
</dbReference>
<dbReference type="PROSITE" id="PS00104">
    <property type="entry name" value="EPSP_SYNTHASE_1"/>
    <property type="match status" value="1"/>
</dbReference>
<dbReference type="PROSITE" id="PS00885">
    <property type="entry name" value="EPSP_SYNTHASE_2"/>
    <property type="match status" value="1"/>
</dbReference>